<keyword id="KW-1015">Disulfide bond</keyword>
<keyword id="KW-0872">Ion channel impairing toxin</keyword>
<keyword id="KW-0528">Neurotoxin</keyword>
<keyword id="KW-0964">Secreted</keyword>
<keyword id="KW-0800">Toxin</keyword>
<keyword id="KW-0738">Voltage-gated sodium channel impairing toxin</keyword>
<evidence type="ECO:0000250" key="1"/>
<evidence type="ECO:0000255" key="2">
    <source>
        <dbReference type="PROSITE-ProRule" id="PRU01210"/>
    </source>
</evidence>
<evidence type="ECO:0000305" key="3"/>
<accession>P60255</accession>
<dbReference type="SMR" id="P60255"/>
<dbReference type="GO" id="GO:0005576">
    <property type="term" value="C:extracellular region"/>
    <property type="evidence" value="ECO:0007669"/>
    <property type="project" value="UniProtKB-SubCell"/>
</dbReference>
<dbReference type="GO" id="GO:0019871">
    <property type="term" value="F:sodium channel inhibitor activity"/>
    <property type="evidence" value="ECO:0007669"/>
    <property type="project" value="InterPro"/>
</dbReference>
<dbReference type="GO" id="GO:0090729">
    <property type="term" value="F:toxin activity"/>
    <property type="evidence" value="ECO:0007669"/>
    <property type="project" value="UniProtKB-KW"/>
</dbReference>
<dbReference type="GO" id="GO:0006952">
    <property type="term" value="P:defense response"/>
    <property type="evidence" value="ECO:0007669"/>
    <property type="project" value="InterPro"/>
</dbReference>
<dbReference type="CDD" id="cd23106">
    <property type="entry name" value="neurotoxins_LC_scorpion"/>
    <property type="match status" value="1"/>
</dbReference>
<dbReference type="FunFam" id="3.30.30.10:FF:000002">
    <property type="entry name" value="Alpha-like toxin BmK-M1"/>
    <property type="match status" value="1"/>
</dbReference>
<dbReference type="Gene3D" id="3.30.30.10">
    <property type="entry name" value="Knottin, scorpion toxin-like"/>
    <property type="match status" value="1"/>
</dbReference>
<dbReference type="InterPro" id="IPR044062">
    <property type="entry name" value="LCN-type_CS_alpha_beta_dom"/>
</dbReference>
<dbReference type="InterPro" id="IPR003614">
    <property type="entry name" value="Scorpion_toxin-like"/>
</dbReference>
<dbReference type="InterPro" id="IPR036574">
    <property type="entry name" value="Scorpion_toxin-like_sf"/>
</dbReference>
<dbReference type="InterPro" id="IPR018218">
    <property type="entry name" value="Scorpion_toxinL"/>
</dbReference>
<dbReference type="InterPro" id="IPR002061">
    <property type="entry name" value="Scorpion_toxinL/defensin"/>
</dbReference>
<dbReference type="Pfam" id="PF00537">
    <property type="entry name" value="Toxin_3"/>
    <property type="match status" value="1"/>
</dbReference>
<dbReference type="PRINTS" id="PR00285">
    <property type="entry name" value="SCORPNTOXIN"/>
</dbReference>
<dbReference type="SMART" id="SM00505">
    <property type="entry name" value="Knot1"/>
    <property type="match status" value="1"/>
</dbReference>
<dbReference type="SUPFAM" id="SSF57095">
    <property type="entry name" value="Scorpion toxin-like"/>
    <property type="match status" value="1"/>
</dbReference>
<dbReference type="PROSITE" id="PS51863">
    <property type="entry name" value="LCN_CSAB"/>
    <property type="match status" value="1"/>
</dbReference>
<proteinExistence type="inferred from homology"/>
<comment type="function">
    <text evidence="1">Alpha toxins bind voltage-independently at site-3 of sodium channels (Nav) and inhibit the inactivation of the activated channels, thereby blocking neuronal transmission.</text>
</comment>
<comment type="subcellular location">
    <subcellularLocation>
        <location>Secreted</location>
    </subcellularLocation>
</comment>
<comment type="tissue specificity">
    <text>Expressed by the venom gland.</text>
</comment>
<comment type="domain">
    <text evidence="3">Has the structural arrangement of an alpha-helix connected to antiparallel beta-sheets by disulfide bonds (CS-alpha/beta).</text>
</comment>
<comment type="similarity">
    <text evidence="3">Belongs to the long (4 C-C) scorpion toxin superfamily. Sodium channel inhibitor family. Alpha subfamily.</text>
</comment>
<protein>
    <recommendedName>
        <fullName>Toxin Boma6a</fullName>
    </recommendedName>
    <alternativeName>
        <fullName>Alpha-neurotoxin Bom alpha-6a</fullName>
    </alternativeName>
</protein>
<sequence>VRDAYIAQNYNCVYDCARDAYCNDLCTKNGAKSGYCEWFGPHGDACWCIDLPNNVPIKVEGKCHRK</sequence>
<name>SCXA_BUTOM</name>
<feature type="chain" id="PRO_0000066739" description="Toxin Boma6a">
    <location>
        <begin position="1"/>
        <end position="66"/>
    </location>
</feature>
<feature type="domain" description="LCN-type CS-alpha/beta" evidence="2">
    <location>
        <begin position="2"/>
        <end position="64"/>
    </location>
</feature>
<feature type="disulfide bond" evidence="2">
    <location>
        <begin position="12"/>
        <end position="63"/>
    </location>
</feature>
<feature type="disulfide bond" evidence="2">
    <location>
        <begin position="16"/>
        <end position="36"/>
    </location>
</feature>
<feature type="disulfide bond" evidence="2">
    <location>
        <begin position="22"/>
        <end position="46"/>
    </location>
</feature>
<feature type="disulfide bond" evidence="2">
    <location>
        <begin position="26"/>
        <end position="48"/>
    </location>
</feature>
<organism>
    <name type="scientific">Buthus occitanus mardochei</name>
    <name type="common">Moroccan scorpion</name>
    <name type="synonym">Buthus mardochei</name>
    <dbReference type="NCBI Taxonomy" id="6869"/>
    <lineage>
        <taxon>Eukaryota</taxon>
        <taxon>Metazoa</taxon>
        <taxon>Ecdysozoa</taxon>
        <taxon>Arthropoda</taxon>
        <taxon>Chelicerata</taxon>
        <taxon>Arachnida</taxon>
        <taxon>Scorpiones</taxon>
        <taxon>Buthida</taxon>
        <taxon>Buthoidea</taxon>
        <taxon>Buthidae</taxon>
        <taxon>Buthus</taxon>
    </lineage>
</organism>
<reference key="1">
    <citation type="journal article" date="1999" name="J. Mol. Evol.">
        <title>Dynamic diversification from a putative common ancestor of scorpion toxins affecting sodium, potassium, and chloride channels.</title>
        <authorList>
            <person name="Froy O."/>
            <person name="Sagiv T."/>
            <person name="Poreh M."/>
            <person name="Urbach D."/>
            <person name="Zilberberg N."/>
            <person name="Gurevitz M."/>
        </authorList>
    </citation>
    <scope>NUCLEOTIDE SEQUENCE [GENOMIC DNA]</scope>
    <source>
        <tissue>Single abdominal segment</tissue>
    </source>
</reference>